<organism>
    <name type="scientific">Salvia sclarea</name>
    <name type="common">Clary sage</name>
    <dbReference type="NCBI Taxonomy" id="38869"/>
    <lineage>
        <taxon>Eukaryota</taxon>
        <taxon>Viridiplantae</taxon>
        <taxon>Streptophyta</taxon>
        <taxon>Embryophyta</taxon>
        <taxon>Tracheophyta</taxon>
        <taxon>Spermatophyta</taxon>
        <taxon>Magnoliopsida</taxon>
        <taxon>eudicotyledons</taxon>
        <taxon>Gunneridae</taxon>
        <taxon>Pentapetalae</taxon>
        <taxon>asterids</taxon>
        <taxon>lamiids</taxon>
        <taxon>Lamiales</taxon>
        <taxon>Lamiaceae</taxon>
        <taxon>Nepetoideae</taxon>
        <taxon>Mentheae</taxon>
        <taxon>Salviinae</taxon>
        <taxon>Salvia</taxon>
        <taxon>Salvia incertae sedis</taxon>
    </lineage>
</organism>
<name>SCLS_SALSC</name>
<accession>G8GJ94</accession>
<accession>K4HYB0</accession>
<keyword id="KW-0150">Chloroplast</keyword>
<keyword id="KW-0456">Lyase</keyword>
<keyword id="KW-0460">Magnesium</keyword>
<keyword id="KW-0479">Metal-binding</keyword>
<keyword id="KW-0934">Plastid</keyword>
<keyword id="KW-0809">Transit peptide</keyword>
<protein>
    <recommendedName>
        <fullName evidence="5 6">Sclareol synthase, chloroplastic</fullName>
        <shortName evidence="5">ScSCS</shortName>
        <shortName evidence="6">SsSS</shortName>
        <ecNumber evidence="3 4">4.2.3.141</ecNumber>
    </recommendedName>
    <alternativeName>
        <fullName evidence="6">Diterpene synthase 1132</fullName>
        <shortName evidence="6">SsTps1132</shortName>
    </alternativeName>
</protein>
<evidence type="ECO:0000250" key="1">
    <source>
        <dbReference type="UniProtKB" id="Q40577"/>
    </source>
</evidence>
<evidence type="ECO:0000255" key="2"/>
<evidence type="ECO:0000269" key="3">
    <source>
    </source>
</evidence>
<evidence type="ECO:0000269" key="4">
    <source>
    </source>
</evidence>
<evidence type="ECO:0000303" key="5">
    <source>
    </source>
</evidence>
<evidence type="ECO:0000303" key="6">
    <source>
    </source>
</evidence>
<evidence type="ECO:0000303" key="7">
    <source>
    </source>
</evidence>
<evidence type="ECO:0000305" key="8"/>
<evidence type="ECO:0000305" key="9">
    <source>
    </source>
</evidence>
<evidence type="ECO:0000305" key="10">
    <source>
    </source>
</evidence>
<evidence type="ECO:0000305" key="11">
    <source>
    </source>
</evidence>
<reference key="1">
    <citation type="journal article" date="2012" name="BMC Plant Biol.">
        <title>Discovery and functional characterization of two diterpene synthases for sclareol biosynthesis in Salvia sclarea (L.) and their relevance for perfume manufacture.</title>
        <authorList>
            <person name="Caniard A."/>
            <person name="Zerbe P."/>
            <person name="Legrand S."/>
            <person name="Cohade A."/>
            <person name="Valot N."/>
            <person name="Magnard J.L."/>
            <person name="Bohlmann J."/>
            <person name="Legendre L."/>
        </authorList>
    </citation>
    <scope>NUCLEOTIDE SEQUENCE [MRNA]</scope>
    <scope>FUNCTION</scope>
    <scope>SUBCELLULAR LOCATION</scope>
    <scope>CATALYTIC ACTIVITY</scope>
    <scope>PATHWAY</scope>
    <scope>BIOTECHNOLOGY</scope>
</reference>
<reference key="2">
    <citation type="journal article" date="2012" name="J. Am. Chem. Soc.">
        <title>Toward a biosynthetic route to sclareol and amber odorants.</title>
        <authorList>
            <person name="Schalk M."/>
            <person name="Pastore L."/>
            <person name="Mirata M.A."/>
            <person name="Khim S."/>
            <person name="Schouwey M."/>
            <person name="Deguerry F."/>
            <person name="Pineda V."/>
            <person name="Rocci L."/>
            <person name="Daviet L."/>
        </authorList>
    </citation>
    <scope>NUCLEOTIDE SEQUENCE [MRNA]</scope>
    <scope>FUNCTION</scope>
    <scope>CATALYTIC ACTIVITY</scope>
    <scope>PATHWAY</scope>
    <scope>BIOTECHNOLOGY</scope>
    <source>
        <tissue>Flower</tissue>
        <tissue>Flower bud</tissue>
        <tissue>Leaf</tissue>
    </source>
</reference>
<reference key="3">
    <citation type="journal article" date="2019" name="Nat. Prod. Rep.">
        <title>Non-volatile natural products in plant glandular trichomes: chemistry, biological activities and biosynthesis.</title>
        <authorList>
            <person name="Liu Y."/>
            <person name="Jing S.-X."/>
            <person name="Luo S.-H."/>
            <person name="Li S.-H."/>
        </authorList>
    </citation>
    <scope>PATHWAY</scope>
    <scope>REVIEW</scope>
</reference>
<gene>
    <name evidence="6" type="primary">SCS</name>
    <name evidence="5" type="synonym">SS</name>
    <name evidence="6" type="synonym">Tps1132</name>
</gene>
<comment type="function">
    <text evidence="3 4 9 10 11">Involved in the biosynthesis of labdane-type diterpenoid including sclareol, a diterpene-diol that is used as fragrance and flavoring, and has anticancer effects (able to kill leukemic and colon cancer cells by apoptosis) (Probable). Sclareol can also be used as synthesis precursor of ambergris substitution fragance products such as ambrox (Probable). Terpene synthase that catalyzes the conversion of 8-hydroxy-copalyl diphosphate to sclareol (PubMed:22834731, PubMed:23113661).</text>
</comment>
<comment type="catalytic activity">
    <reaction evidence="3 4">
        <text>8-hydroxycopalyl diphosphate + H2O = sclareol + diphosphate</text>
        <dbReference type="Rhea" id="RHEA:34459"/>
        <dbReference type="ChEBI" id="CHEBI:9053"/>
        <dbReference type="ChEBI" id="CHEBI:15377"/>
        <dbReference type="ChEBI" id="CHEBI:33019"/>
        <dbReference type="ChEBI" id="CHEBI:64283"/>
        <dbReference type="EC" id="4.2.3.141"/>
    </reaction>
    <physiologicalReaction direction="left-to-right" evidence="3 4">
        <dbReference type="Rhea" id="RHEA:34460"/>
    </physiologicalReaction>
</comment>
<comment type="pathway">
    <text evidence="3 4 7">Secondary metabolite biosynthesis; terpenoid biosynthesis.</text>
</comment>
<comment type="subcellular location">
    <subcellularLocation>
        <location evidence="3">Plastid</location>
        <location evidence="3">Chloroplast</location>
    </subcellularLocation>
</comment>
<comment type="domain">
    <text evidence="8">The Asp-Asp-Xaa-Xaa-Asp/Glu (DDXXD/E) motif is important for the catalytic activity, presumably through binding to Mg(2+).</text>
</comment>
<comment type="biotechnology">
    <text evidence="4">Escherichia coli expressing SsLPS and SsSCS from Salvia sclarea and CrtE from Pantoea agglomerans can produce sclareol in high-cell-density fermentation conditions, thus being an alternative, sustainable, and cost-efficient route to sclareol and other diterpene analogs.</text>
</comment>
<comment type="biotechnology">
    <text evidence="3">Yeast (S.cerevisiae) engineered to express S.cerevisiae GGPPS and Salvia sclarea LPS and SCS is an efficient way to produce sclareol in a scalable and potentially industrial way.</text>
</comment>
<comment type="similarity">
    <text evidence="8">Belongs to the terpene synthase family.</text>
</comment>
<dbReference type="EC" id="4.2.3.141" evidence="3 4"/>
<dbReference type="EMBL" id="JQ478435">
    <property type="protein sequence ID" value="AFU61898.1"/>
    <property type="molecule type" value="mRNA"/>
</dbReference>
<dbReference type="EMBL" id="JN133922">
    <property type="protein sequence ID" value="AET21246.1"/>
    <property type="molecule type" value="mRNA"/>
</dbReference>
<dbReference type="SMR" id="G8GJ94"/>
<dbReference type="KEGG" id="ag:AFU61898"/>
<dbReference type="BRENDA" id="4.2.3.141">
    <property type="organism ID" value="13177"/>
</dbReference>
<dbReference type="BRENDA" id="4.2.3.B31">
    <property type="organism ID" value="13177"/>
</dbReference>
<dbReference type="UniPathway" id="UPA00213"/>
<dbReference type="GO" id="GO:0009507">
    <property type="term" value="C:chloroplast"/>
    <property type="evidence" value="ECO:0000314"/>
    <property type="project" value="UniProtKB"/>
</dbReference>
<dbReference type="GO" id="GO:0000287">
    <property type="term" value="F:magnesium ion binding"/>
    <property type="evidence" value="ECO:0007669"/>
    <property type="project" value="InterPro"/>
</dbReference>
<dbReference type="GO" id="GO:0010333">
    <property type="term" value="F:terpene synthase activity"/>
    <property type="evidence" value="ECO:0007669"/>
    <property type="project" value="InterPro"/>
</dbReference>
<dbReference type="GO" id="GO:0016102">
    <property type="term" value="P:diterpenoid biosynthetic process"/>
    <property type="evidence" value="ECO:0000314"/>
    <property type="project" value="UniProtKB"/>
</dbReference>
<dbReference type="GO" id="GO:0009686">
    <property type="term" value="P:gibberellin biosynthetic process"/>
    <property type="evidence" value="ECO:0007669"/>
    <property type="project" value="TreeGrafter"/>
</dbReference>
<dbReference type="Gene3D" id="1.10.600.10">
    <property type="entry name" value="Farnesyl Diphosphate Synthase"/>
    <property type="match status" value="1"/>
</dbReference>
<dbReference type="Gene3D" id="1.50.10.130">
    <property type="entry name" value="Terpene synthase, N-terminal domain"/>
    <property type="match status" value="1"/>
</dbReference>
<dbReference type="InterPro" id="IPR008949">
    <property type="entry name" value="Isoprenoid_synthase_dom_sf"/>
</dbReference>
<dbReference type="InterPro" id="IPR001906">
    <property type="entry name" value="Terpene_synth_N"/>
</dbReference>
<dbReference type="InterPro" id="IPR036965">
    <property type="entry name" value="Terpene_synth_N_sf"/>
</dbReference>
<dbReference type="InterPro" id="IPR050148">
    <property type="entry name" value="Terpene_synthase-like"/>
</dbReference>
<dbReference type="InterPro" id="IPR005630">
    <property type="entry name" value="Terpene_synthase_metal-bd"/>
</dbReference>
<dbReference type="InterPro" id="IPR008930">
    <property type="entry name" value="Terpenoid_cyclase/PrenylTrfase"/>
</dbReference>
<dbReference type="PANTHER" id="PTHR31739:SF33">
    <property type="entry name" value="CIS-ABIENOL SYNTHASE, CHLOROPLASTIC"/>
    <property type="match status" value="1"/>
</dbReference>
<dbReference type="PANTHER" id="PTHR31739">
    <property type="entry name" value="ENT-COPALYL DIPHOSPHATE SYNTHASE, CHLOROPLASTIC"/>
    <property type="match status" value="1"/>
</dbReference>
<dbReference type="Pfam" id="PF01397">
    <property type="entry name" value="Terpene_synth"/>
    <property type="match status" value="1"/>
</dbReference>
<dbReference type="Pfam" id="PF03936">
    <property type="entry name" value="Terpene_synth_C"/>
    <property type="match status" value="1"/>
</dbReference>
<dbReference type="SUPFAM" id="SSF48239">
    <property type="entry name" value="Terpenoid cyclases/Protein prenyltransferases"/>
    <property type="match status" value="1"/>
</dbReference>
<dbReference type="SUPFAM" id="SSF48576">
    <property type="entry name" value="Terpenoid synthases"/>
    <property type="match status" value="1"/>
</dbReference>
<feature type="transit peptide" description="Chloroplast" evidence="2">
    <location>
        <begin position="1"/>
        <end position="51"/>
    </location>
</feature>
<feature type="chain" id="PRO_0000448859" description="Sclareol synthase, chloroplastic" evidence="2">
    <location>
        <begin position="52"/>
        <end position="575"/>
    </location>
</feature>
<feature type="short sequence motif" description="DDXXD motif" evidence="8">
    <location>
        <begin position="329"/>
        <end position="333"/>
    </location>
</feature>
<feature type="binding site" evidence="1">
    <location>
        <position position="329"/>
    </location>
    <ligand>
        <name>Mg(2+)</name>
        <dbReference type="ChEBI" id="CHEBI:18420"/>
        <label>1</label>
    </ligand>
</feature>
<feature type="binding site" evidence="1">
    <location>
        <position position="329"/>
    </location>
    <ligand>
        <name>Mg(2+)</name>
        <dbReference type="ChEBI" id="CHEBI:18420"/>
        <label>2</label>
    </ligand>
</feature>
<feature type="binding site" evidence="1">
    <location>
        <position position="333"/>
    </location>
    <ligand>
        <name>Mg(2+)</name>
        <dbReference type="ChEBI" id="CHEBI:18420"/>
        <label>1</label>
    </ligand>
</feature>
<feature type="binding site" evidence="1">
    <location>
        <position position="333"/>
    </location>
    <ligand>
        <name>Mg(2+)</name>
        <dbReference type="ChEBI" id="CHEBI:18420"/>
        <label>2</label>
    </ligand>
</feature>
<feature type="binding site" evidence="1">
    <location>
        <position position="473"/>
    </location>
    <ligand>
        <name>Mg(2+)</name>
        <dbReference type="ChEBI" id="CHEBI:18420"/>
        <label>3</label>
    </ligand>
</feature>
<feature type="binding site" evidence="1">
    <location>
        <position position="477"/>
    </location>
    <ligand>
        <name>Mg(2+)</name>
        <dbReference type="ChEBI" id="CHEBI:18420"/>
        <label>3</label>
    </ligand>
</feature>
<feature type="binding site" evidence="1">
    <location>
        <position position="481"/>
    </location>
    <ligand>
        <name>Mg(2+)</name>
        <dbReference type="ChEBI" id="CHEBI:18420"/>
        <label>3</label>
    </ligand>
</feature>
<feature type="sequence conflict" description="In Ref. 1; AFU61898." evidence="8" ref="1">
    <original>K</original>
    <variation>N</variation>
    <location>
        <position position="23"/>
    </location>
</feature>
<feature type="sequence conflict" description="In Ref. 1; AFU61898." evidence="8" ref="1">
    <original>I</original>
    <variation>V</variation>
    <location>
        <position position="297"/>
    </location>
</feature>
<proteinExistence type="evidence at protein level"/>
<sequence length="575" mass="66681">MSLAFNVGVTPFSGQRVGSRKEKFPVQGFPVTTPNRSRLIVNCSLTTIDFMAKMKENFKREDDKFPTTTTLRSEDIPSNLCIIDTLQRLGVDQFFQYEINTILDNTFRLWQEKHKVIYGNVTTHAMAFRLLRVKGYEVSSEELAPYGNQEAVSQQTNDLPMIIELYRAANERIYEEERSLEKILAWTTIFLNKQVQDNSIPDKKLHKLVEFYLRNYKGITIRLGARRNLELYDMTYYQALKSTNRFSNLCNEDFLVFAKQDFDIHEAQNQKGLQQLQRWYADCRLDTLNFGRDVVIIANYLASLIIGDHAFDYVRLAFAKTSVLVTIMDDFFDCHGSSQECDKIIELVKEWKENPDAEYGSEELEILFMALYNTVNELAERARVEQGRSVKEFLVKLWVEILSAFKIELDTWSNGTQQSFDEYISSSWLSNGSRLTGLLTMQFVGVKLSDEMLMSEECTDLARHVCMVGRLLNDVCSSEREREENIAGKSYSILLATEKDGRKVSEDEAIAEINEMVEYHWRKVLQIVYKKESILPRRCKDVFLEMAKGTFYAYGINDELTSPQQSKEDMKSFVF</sequence>